<dbReference type="EC" id="3.2.2.27" evidence="1"/>
<dbReference type="EMBL" id="CP000247">
    <property type="protein sequence ID" value="ABG70571.1"/>
    <property type="molecule type" value="Genomic_DNA"/>
</dbReference>
<dbReference type="RefSeq" id="WP_001262726.1">
    <property type="nucleotide sequence ID" value="NC_008253.1"/>
</dbReference>
<dbReference type="SMR" id="Q0TEQ8"/>
<dbReference type="KEGG" id="ecp:ECP_2582"/>
<dbReference type="HOGENOM" id="CLU_032162_3_0_6"/>
<dbReference type="Proteomes" id="UP000009182">
    <property type="component" value="Chromosome"/>
</dbReference>
<dbReference type="GO" id="GO:0005737">
    <property type="term" value="C:cytoplasm"/>
    <property type="evidence" value="ECO:0007669"/>
    <property type="project" value="UniProtKB-SubCell"/>
</dbReference>
<dbReference type="GO" id="GO:0004844">
    <property type="term" value="F:uracil DNA N-glycosylase activity"/>
    <property type="evidence" value="ECO:0007669"/>
    <property type="project" value="UniProtKB-UniRule"/>
</dbReference>
<dbReference type="GO" id="GO:0097510">
    <property type="term" value="P:base-excision repair, AP site formation via deaminated base removal"/>
    <property type="evidence" value="ECO:0007669"/>
    <property type="project" value="TreeGrafter"/>
</dbReference>
<dbReference type="CDD" id="cd10027">
    <property type="entry name" value="UDG-F1-like"/>
    <property type="match status" value="1"/>
</dbReference>
<dbReference type="FunFam" id="3.40.470.10:FF:000001">
    <property type="entry name" value="Uracil-DNA glycosylase"/>
    <property type="match status" value="1"/>
</dbReference>
<dbReference type="Gene3D" id="3.40.470.10">
    <property type="entry name" value="Uracil-DNA glycosylase-like domain"/>
    <property type="match status" value="1"/>
</dbReference>
<dbReference type="HAMAP" id="MF_00148">
    <property type="entry name" value="UDG"/>
    <property type="match status" value="1"/>
</dbReference>
<dbReference type="InterPro" id="IPR002043">
    <property type="entry name" value="UDG_fam1"/>
</dbReference>
<dbReference type="InterPro" id="IPR018085">
    <property type="entry name" value="Ura-DNA_Glyclase_AS"/>
</dbReference>
<dbReference type="InterPro" id="IPR005122">
    <property type="entry name" value="Uracil-DNA_glycosylase-like"/>
</dbReference>
<dbReference type="InterPro" id="IPR036895">
    <property type="entry name" value="Uracil-DNA_glycosylase-like_sf"/>
</dbReference>
<dbReference type="NCBIfam" id="NF003588">
    <property type="entry name" value="PRK05254.1-1"/>
    <property type="match status" value="1"/>
</dbReference>
<dbReference type="NCBIfam" id="NF003589">
    <property type="entry name" value="PRK05254.1-2"/>
    <property type="match status" value="1"/>
</dbReference>
<dbReference type="NCBIfam" id="NF003591">
    <property type="entry name" value="PRK05254.1-4"/>
    <property type="match status" value="1"/>
</dbReference>
<dbReference type="NCBIfam" id="NF003592">
    <property type="entry name" value="PRK05254.1-5"/>
    <property type="match status" value="1"/>
</dbReference>
<dbReference type="NCBIfam" id="TIGR00628">
    <property type="entry name" value="ung"/>
    <property type="match status" value="1"/>
</dbReference>
<dbReference type="PANTHER" id="PTHR11264">
    <property type="entry name" value="URACIL-DNA GLYCOSYLASE"/>
    <property type="match status" value="1"/>
</dbReference>
<dbReference type="PANTHER" id="PTHR11264:SF0">
    <property type="entry name" value="URACIL-DNA GLYCOSYLASE"/>
    <property type="match status" value="1"/>
</dbReference>
<dbReference type="Pfam" id="PF03167">
    <property type="entry name" value="UDG"/>
    <property type="match status" value="1"/>
</dbReference>
<dbReference type="SMART" id="SM00986">
    <property type="entry name" value="UDG"/>
    <property type="match status" value="1"/>
</dbReference>
<dbReference type="SMART" id="SM00987">
    <property type="entry name" value="UreE_C"/>
    <property type="match status" value="1"/>
</dbReference>
<dbReference type="SUPFAM" id="SSF52141">
    <property type="entry name" value="Uracil-DNA glycosylase-like"/>
    <property type="match status" value="1"/>
</dbReference>
<dbReference type="PROSITE" id="PS00130">
    <property type="entry name" value="U_DNA_GLYCOSYLASE"/>
    <property type="match status" value="1"/>
</dbReference>
<keyword id="KW-0963">Cytoplasm</keyword>
<keyword id="KW-0227">DNA damage</keyword>
<keyword id="KW-0234">DNA repair</keyword>
<keyword id="KW-0378">Hydrolase</keyword>
<reference key="1">
    <citation type="journal article" date="2006" name="Mol. Microbiol.">
        <title>Role of pathogenicity island-associated integrases in the genome plasticity of uropathogenic Escherichia coli strain 536.</title>
        <authorList>
            <person name="Hochhut B."/>
            <person name="Wilde C."/>
            <person name="Balling G."/>
            <person name="Middendorf B."/>
            <person name="Dobrindt U."/>
            <person name="Brzuszkiewicz E."/>
            <person name="Gottschalk G."/>
            <person name="Carniel E."/>
            <person name="Hacker J."/>
        </authorList>
    </citation>
    <scope>NUCLEOTIDE SEQUENCE [LARGE SCALE GENOMIC DNA]</scope>
    <source>
        <strain>536 / UPEC</strain>
    </source>
</reference>
<organism>
    <name type="scientific">Escherichia coli O6:K15:H31 (strain 536 / UPEC)</name>
    <dbReference type="NCBI Taxonomy" id="362663"/>
    <lineage>
        <taxon>Bacteria</taxon>
        <taxon>Pseudomonadati</taxon>
        <taxon>Pseudomonadota</taxon>
        <taxon>Gammaproteobacteria</taxon>
        <taxon>Enterobacterales</taxon>
        <taxon>Enterobacteriaceae</taxon>
        <taxon>Escherichia</taxon>
    </lineage>
</organism>
<evidence type="ECO:0000255" key="1">
    <source>
        <dbReference type="HAMAP-Rule" id="MF_00148"/>
    </source>
</evidence>
<sequence>MANELTWHDVLAEEKQQPYFLNTLQTVASERQSGVTIYPPQKDVFNAFRFTELGDVKVVILGQDPYHGPGQAHGLAFSVRPGIATPPSLLNMYKELENTIPGFTRPNHGYLESWARQGVLLLNTVLTVRAGQAHSHASLGWETFTDKVISLINQHRKGVVFLLWGSHAQKKGAIIDKQRHHVLKAPHPSPLSAHRGFFGCNHFVLANQWLEQRGETPIDWMPVLPAESE</sequence>
<feature type="chain" id="PRO_1000009886" description="Uracil-DNA glycosylase">
    <location>
        <begin position="1"/>
        <end position="229"/>
    </location>
</feature>
<feature type="active site" description="Proton acceptor" evidence="1">
    <location>
        <position position="64"/>
    </location>
</feature>
<gene>
    <name evidence="1" type="primary">ung</name>
    <name type="ordered locus">ECP_2582</name>
</gene>
<comment type="function">
    <text evidence="1">Excises uracil residues from the DNA which can arise as a result of misincorporation of dUMP residues by DNA polymerase or due to deamination of cytosine.</text>
</comment>
<comment type="catalytic activity">
    <reaction evidence="1">
        <text>Hydrolyzes single-stranded DNA or mismatched double-stranded DNA and polynucleotides, releasing free uracil.</text>
        <dbReference type="EC" id="3.2.2.27"/>
    </reaction>
</comment>
<comment type="subcellular location">
    <subcellularLocation>
        <location evidence="1">Cytoplasm</location>
    </subcellularLocation>
</comment>
<comment type="similarity">
    <text evidence="1">Belongs to the uracil-DNA glycosylase (UDG) superfamily. UNG family.</text>
</comment>
<name>UNG_ECOL5</name>
<proteinExistence type="inferred from homology"/>
<accession>Q0TEQ8</accession>
<protein>
    <recommendedName>
        <fullName evidence="1">Uracil-DNA glycosylase</fullName>
        <shortName evidence="1">UDG</shortName>
        <ecNumber evidence="1">3.2.2.27</ecNumber>
    </recommendedName>
</protein>